<proteinExistence type="inferred from homology"/>
<comment type="function">
    <text evidence="1">Specifically dimethylates two adjacent adenosines (A1518 and A1519) in the loop of a conserved hairpin near the 3'-end of 16S rRNA in the 30S particle. May play a critical role in biogenesis of 30S subunits.</text>
</comment>
<comment type="catalytic activity">
    <reaction evidence="1">
        <text>adenosine(1518)/adenosine(1519) in 16S rRNA + 4 S-adenosyl-L-methionine = N(6)-dimethyladenosine(1518)/N(6)-dimethyladenosine(1519) in 16S rRNA + 4 S-adenosyl-L-homocysteine + 4 H(+)</text>
        <dbReference type="Rhea" id="RHEA:19609"/>
        <dbReference type="Rhea" id="RHEA-COMP:10232"/>
        <dbReference type="Rhea" id="RHEA-COMP:10233"/>
        <dbReference type="ChEBI" id="CHEBI:15378"/>
        <dbReference type="ChEBI" id="CHEBI:57856"/>
        <dbReference type="ChEBI" id="CHEBI:59789"/>
        <dbReference type="ChEBI" id="CHEBI:74411"/>
        <dbReference type="ChEBI" id="CHEBI:74493"/>
        <dbReference type="EC" id="2.1.1.182"/>
    </reaction>
</comment>
<comment type="subcellular location">
    <subcellularLocation>
        <location evidence="1">Cytoplasm</location>
    </subcellularLocation>
</comment>
<comment type="similarity">
    <text evidence="1">Belongs to the class I-like SAM-binding methyltransferase superfamily. rRNA adenine N(6)-methyltransferase family. RsmA subfamily.</text>
</comment>
<gene>
    <name evidence="1" type="primary">rsmA</name>
    <name evidence="1" type="synonym">ksgA</name>
    <name type="ordered locus">BPUM_0026</name>
</gene>
<name>RSMA_BACP2</name>
<sequence>MNKDIATPIRTKEILKKYGFSFKKSLGQNFLIDTNILDRIVDHAEVTDETGVIEIGPGIGALTEQLAKRAKKVTAFEIDQRLLPILNDTLSPYDNVTIIHQDVLKADVGKVIEENFADCKEVMVVANLPYYVTTPIIMKLLEENLPLKGIVVMLQKEVADRMAAIPSSKEYNSLSIAVQYYTEAKTVMVVPKTVFVPQPNVDSAVIKLTVRETPAVSVENDEFFFQLIRASFGQRRKTLMNNLMNNLPDGKQHKAIIEEALQTADIDGKRRGESLSIEEFARLSNVLQKALF</sequence>
<evidence type="ECO:0000255" key="1">
    <source>
        <dbReference type="HAMAP-Rule" id="MF_00607"/>
    </source>
</evidence>
<feature type="chain" id="PRO_1000061281" description="Ribosomal RNA small subunit methyltransferase A">
    <location>
        <begin position="1"/>
        <end position="292"/>
    </location>
</feature>
<feature type="binding site" evidence="1">
    <location>
        <position position="29"/>
    </location>
    <ligand>
        <name>S-adenosyl-L-methionine</name>
        <dbReference type="ChEBI" id="CHEBI:59789"/>
    </ligand>
</feature>
<feature type="binding site" evidence="1">
    <location>
        <position position="31"/>
    </location>
    <ligand>
        <name>S-adenosyl-L-methionine</name>
        <dbReference type="ChEBI" id="CHEBI:59789"/>
    </ligand>
</feature>
<feature type="binding site" evidence="1">
    <location>
        <position position="56"/>
    </location>
    <ligand>
        <name>S-adenosyl-L-methionine</name>
        <dbReference type="ChEBI" id="CHEBI:59789"/>
    </ligand>
</feature>
<feature type="binding site" evidence="1">
    <location>
        <position position="77"/>
    </location>
    <ligand>
        <name>S-adenosyl-L-methionine</name>
        <dbReference type="ChEBI" id="CHEBI:59789"/>
    </ligand>
</feature>
<feature type="binding site" evidence="1">
    <location>
        <position position="102"/>
    </location>
    <ligand>
        <name>S-adenosyl-L-methionine</name>
        <dbReference type="ChEBI" id="CHEBI:59789"/>
    </ligand>
</feature>
<feature type="binding site" evidence="1">
    <location>
        <position position="127"/>
    </location>
    <ligand>
        <name>S-adenosyl-L-methionine</name>
        <dbReference type="ChEBI" id="CHEBI:59789"/>
    </ligand>
</feature>
<dbReference type="EC" id="2.1.1.182" evidence="1"/>
<dbReference type="EMBL" id="CP000813">
    <property type="protein sequence ID" value="ABV60726.1"/>
    <property type="molecule type" value="Genomic_DNA"/>
</dbReference>
<dbReference type="RefSeq" id="WP_012008651.1">
    <property type="nucleotide sequence ID" value="NZ_VEIC01000025.1"/>
</dbReference>
<dbReference type="SMR" id="A8F909"/>
<dbReference type="STRING" id="315750.BPUM_0026"/>
<dbReference type="GeneID" id="5619263"/>
<dbReference type="KEGG" id="bpu:BPUM_0026"/>
<dbReference type="eggNOG" id="COG0030">
    <property type="taxonomic scope" value="Bacteria"/>
</dbReference>
<dbReference type="HOGENOM" id="CLU_041220_0_0_9"/>
<dbReference type="OrthoDB" id="9814755at2"/>
<dbReference type="Proteomes" id="UP000001355">
    <property type="component" value="Chromosome"/>
</dbReference>
<dbReference type="GO" id="GO:0005829">
    <property type="term" value="C:cytosol"/>
    <property type="evidence" value="ECO:0007669"/>
    <property type="project" value="TreeGrafter"/>
</dbReference>
<dbReference type="GO" id="GO:0052908">
    <property type="term" value="F:16S rRNA (adenine(1518)-N(6)/adenine(1519)-N(6))-dimethyltransferase activity"/>
    <property type="evidence" value="ECO:0007669"/>
    <property type="project" value="UniProtKB-EC"/>
</dbReference>
<dbReference type="GO" id="GO:0003723">
    <property type="term" value="F:RNA binding"/>
    <property type="evidence" value="ECO:0007669"/>
    <property type="project" value="UniProtKB-KW"/>
</dbReference>
<dbReference type="CDD" id="cd02440">
    <property type="entry name" value="AdoMet_MTases"/>
    <property type="match status" value="1"/>
</dbReference>
<dbReference type="FunFam" id="1.10.8.100:FF:000002">
    <property type="entry name" value="Ribosomal RNA small subunit methyltransferase A"/>
    <property type="match status" value="1"/>
</dbReference>
<dbReference type="FunFam" id="3.40.50.150:FF:000023">
    <property type="entry name" value="Ribosomal RNA small subunit methyltransferase A"/>
    <property type="match status" value="1"/>
</dbReference>
<dbReference type="Gene3D" id="1.10.8.100">
    <property type="entry name" value="Ribosomal RNA adenine dimethylase-like, domain 2"/>
    <property type="match status" value="1"/>
</dbReference>
<dbReference type="Gene3D" id="3.40.50.150">
    <property type="entry name" value="Vaccinia Virus protein VP39"/>
    <property type="match status" value="1"/>
</dbReference>
<dbReference type="HAMAP" id="MF_00607">
    <property type="entry name" value="16SrRNA_methyltr_A"/>
    <property type="match status" value="1"/>
</dbReference>
<dbReference type="InterPro" id="IPR001737">
    <property type="entry name" value="KsgA/Erm"/>
</dbReference>
<dbReference type="InterPro" id="IPR023165">
    <property type="entry name" value="rRNA_Ade_diMease-like_C"/>
</dbReference>
<dbReference type="InterPro" id="IPR020596">
    <property type="entry name" value="rRNA_Ade_Mease_Trfase_CS"/>
</dbReference>
<dbReference type="InterPro" id="IPR020598">
    <property type="entry name" value="rRNA_Ade_methylase_Trfase_N"/>
</dbReference>
<dbReference type="InterPro" id="IPR011530">
    <property type="entry name" value="rRNA_adenine_dimethylase"/>
</dbReference>
<dbReference type="InterPro" id="IPR029063">
    <property type="entry name" value="SAM-dependent_MTases_sf"/>
</dbReference>
<dbReference type="NCBIfam" id="TIGR00755">
    <property type="entry name" value="ksgA"/>
    <property type="match status" value="1"/>
</dbReference>
<dbReference type="PANTHER" id="PTHR11727">
    <property type="entry name" value="DIMETHYLADENOSINE TRANSFERASE"/>
    <property type="match status" value="1"/>
</dbReference>
<dbReference type="PANTHER" id="PTHR11727:SF7">
    <property type="entry name" value="DIMETHYLADENOSINE TRANSFERASE-RELATED"/>
    <property type="match status" value="1"/>
</dbReference>
<dbReference type="Pfam" id="PF00398">
    <property type="entry name" value="RrnaAD"/>
    <property type="match status" value="1"/>
</dbReference>
<dbReference type="SMART" id="SM00650">
    <property type="entry name" value="rADc"/>
    <property type="match status" value="1"/>
</dbReference>
<dbReference type="SUPFAM" id="SSF53335">
    <property type="entry name" value="S-adenosyl-L-methionine-dependent methyltransferases"/>
    <property type="match status" value="1"/>
</dbReference>
<dbReference type="PROSITE" id="PS01131">
    <property type="entry name" value="RRNA_A_DIMETH"/>
    <property type="match status" value="1"/>
</dbReference>
<dbReference type="PROSITE" id="PS51689">
    <property type="entry name" value="SAM_RNA_A_N6_MT"/>
    <property type="match status" value="1"/>
</dbReference>
<accession>A8F909</accession>
<keyword id="KW-0963">Cytoplasm</keyword>
<keyword id="KW-0489">Methyltransferase</keyword>
<keyword id="KW-0694">RNA-binding</keyword>
<keyword id="KW-0698">rRNA processing</keyword>
<keyword id="KW-0949">S-adenosyl-L-methionine</keyword>
<keyword id="KW-0808">Transferase</keyword>
<organism>
    <name type="scientific">Bacillus pumilus (strain SAFR-032)</name>
    <dbReference type="NCBI Taxonomy" id="315750"/>
    <lineage>
        <taxon>Bacteria</taxon>
        <taxon>Bacillati</taxon>
        <taxon>Bacillota</taxon>
        <taxon>Bacilli</taxon>
        <taxon>Bacillales</taxon>
        <taxon>Bacillaceae</taxon>
        <taxon>Bacillus</taxon>
    </lineage>
</organism>
<reference key="1">
    <citation type="journal article" date="2007" name="PLoS ONE">
        <title>Paradoxical DNA repair and peroxide resistance gene conservation in Bacillus pumilus SAFR-032.</title>
        <authorList>
            <person name="Gioia J."/>
            <person name="Yerrapragada S."/>
            <person name="Qin X."/>
            <person name="Jiang H."/>
            <person name="Igboeli O.C."/>
            <person name="Muzny D."/>
            <person name="Dugan-Rocha S."/>
            <person name="Ding Y."/>
            <person name="Hawes A."/>
            <person name="Liu W."/>
            <person name="Perez L."/>
            <person name="Kovar C."/>
            <person name="Dinh H."/>
            <person name="Lee S."/>
            <person name="Nazareth L."/>
            <person name="Blyth P."/>
            <person name="Holder M."/>
            <person name="Buhay C."/>
            <person name="Tirumalai M.R."/>
            <person name="Liu Y."/>
            <person name="Dasgupta I."/>
            <person name="Bokhetache L."/>
            <person name="Fujita M."/>
            <person name="Karouia F."/>
            <person name="Eswara Moorthy P."/>
            <person name="Siefert J."/>
            <person name="Uzman A."/>
            <person name="Buzumbo P."/>
            <person name="Verma A."/>
            <person name="Zwiya H."/>
            <person name="McWilliams B.D."/>
            <person name="Olowu A."/>
            <person name="Clinkenbeard K.D."/>
            <person name="Newcombe D."/>
            <person name="Golebiewski L."/>
            <person name="Petrosino J.F."/>
            <person name="Nicholson W.L."/>
            <person name="Fox G.E."/>
            <person name="Venkateswaran K."/>
            <person name="Highlander S.K."/>
            <person name="Weinstock G.M."/>
        </authorList>
    </citation>
    <scope>NUCLEOTIDE SEQUENCE [LARGE SCALE GENOMIC DNA]</scope>
    <source>
        <strain>SAFR-032</strain>
    </source>
</reference>
<protein>
    <recommendedName>
        <fullName evidence="1">Ribosomal RNA small subunit methyltransferase A</fullName>
        <ecNumber evidence="1">2.1.1.182</ecNumber>
    </recommendedName>
    <alternativeName>
        <fullName evidence="1">16S rRNA (adenine(1518)-N(6)/adenine(1519)-N(6))-dimethyltransferase</fullName>
    </alternativeName>
    <alternativeName>
        <fullName evidence="1">16S rRNA dimethyladenosine transferase</fullName>
    </alternativeName>
    <alternativeName>
        <fullName evidence="1">16S rRNA dimethylase</fullName>
    </alternativeName>
    <alternativeName>
        <fullName evidence="1">S-adenosylmethionine-6-N', N'-adenosyl(rRNA) dimethyltransferase</fullName>
    </alternativeName>
</protein>